<dbReference type="EMBL" id="AM920689">
    <property type="protein sequence ID" value="CAP52704.1"/>
    <property type="molecule type" value="Genomic_DNA"/>
</dbReference>
<dbReference type="SMR" id="B0RYI4"/>
<dbReference type="KEGG" id="xca:xcc-b100_3339"/>
<dbReference type="HOGENOM" id="CLU_108696_5_1_6"/>
<dbReference type="UniPathway" id="UPA00094"/>
<dbReference type="Proteomes" id="UP000001188">
    <property type="component" value="Chromosome"/>
</dbReference>
<dbReference type="GO" id="GO:0005829">
    <property type="term" value="C:cytosol"/>
    <property type="evidence" value="ECO:0007669"/>
    <property type="project" value="TreeGrafter"/>
</dbReference>
<dbReference type="GO" id="GO:0016020">
    <property type="term" value="C:membrane"/>
    <property type="evidence" value="ECO:0007669"/>
    <property type="project" value="GOC"/>
</dbReference>
<dbReference type="GO" id="GO:0000035">
    <property type="term" value="F:acyl binding"/>
    <property type="evidence" value="ECO:0007669"/>
    <property type="project" value="TreeGrafter"/>
</dbReference>
<dbReference type="GO" id="GO:0000036">
    <property type="term" value="F:acyl carrier activity"/>
    <property type="evidence" value="ECO:0007669"/>
    <property type="project" value="UniProtKB-UniRule"/>
</dbReference>
<dbReference type="GO" id="GO:0009245">
    <property type="term" value="P:lipid A biosynthetic process"/>
    <property type="evidence" value="ECO:0007669"/>
    <property type="project" value="TreeGrafter"/>
</dbReference>
<dbReference type="FunFam" id="1.10.1200.10:FF:000001">
    <property type="entry name" value="Acyl carrier protein"/>
    <property type="match status" value="1"/>
</dbReference>
<dbReference type="Gene3D" id="1.10.1200.10">
    <property type="entry name" value="ACP-like"/>
    <property type="match status" value="1"/>
</dbReference>
<dbReference type="HAMAP" id="MF_01217">
    <property type="entry name" value="Acyl_carrier"/>
    <property type="match status" value="1"/>
</dbReference>
<dbReference type="InterPro" id="IPR003231">
    <property type="entry name" value="ACP"/>
</dbReference>
<dbReference type="InterPro" id="IPR036736">
    <property type="entry name" value="ACP-like_sf"/>
</dbReference>
<dbReference type="InterPro" id="IPR009081">
    <property type="entry name" value="PP-bd_ACP"/>
</dbReference>
<dbReference type="InterPro" id="IPR006162">
    <property type="entry name" value="Ppantetheine_attach_site"/>
</dbReference>
<dbReference type="NCBIfam" id="TIGR00517">
    <property type="entry name" value="acyl_carrier"/>
    <property type="match status" value="1"/>
</dbReference>
<dbReference type="NCBIfam" id="NF002148">
    <property type="entry name" value="PRK00982.1-2"/>
    <property type="match status" value="1"/>
</dbReference>
<dbReference type="NCBIfam" id="NF002149">
    <property type="entry name" value="PRK00982.1-3"/>
    <property type="match status" value="1"/>
</dbReference>
<dbReference type="NCBIfam" id="NF002150">
    <property type="entry name" value="PRK00982.1-4"/>
    <property type="match status" value="1"/>
</dbReference>
<dbReference type="NCBIfam" id="NF002151">
    <property type="entry name" value="PRK00982.1-5"/>
    <property type="match status" value="1"/>
</dbReference>
<dbReference type="PANTHER" id="PTHR20863">
    <property type="entry name" value="ACYL CARRIER PROTEIN"/>
    <property type="match status" value="1"/>
</dbReference>
<dbReference type="PANTHER" id="PTHR20863:SF76">
    <property type="entry name" value="CARRIER DOMAIN-CONTAINING PROTEIN"/>
    <property type="match status" value="1"/>
</dbReference>
<dbReference type="Pfam" id="PF00550">
    <property type="entry name" value="PP-binding"/>
    <property type="match status" value="1"/>
</dbReference>
<dbReference type="SUPFAM" id="SSF47336">
    <property type="entry name" value="ACP-like"/>
    <property type="match status" value="1"/>
</dbReference>
<dbReference type="PROSITE" id="PS50075">
    <property type="entry name" value="CARRIER"/>
    <property type="match status" value="1"/>
</dbReference>
<dbReference type="PROSITE" id="PS00012">
    <property type="entry name" value="PHOSPHOPANTETHEINE"/>
    <property type="match status" value="1"/>
</dbReference>
<protein>
    <recommendedName>
        <fullName evidence="1">Acyl carrier protein</fullName>
        <shortName evidence="1">ACP</shortName>
    </recommendedName>
</protein>
<accession>B0RYI4</accession>
<reference key="1">
    <citation type="journal article" date="2008" name="J. Biotechnol.">
        <title>The genome of Xanthomonas campestris pv. campestris B100 and its use for the reconstruction of metabolic pathways involved in xanthan biosynthesis.</title>
        <authorList>
            <person name="Vorhoelter F.-J."/>
            <person name="Schneiker S."/>
            <person name="Goesmann A."/>
            <person name="Krause L."/>
            <person name="Bekel T."/>
            <person name="Kaiser O."/>
            <person name="Linke B."/>
            <person name="Patschkowski T."/>
            <person name="Rueckert C."/>
            <person name="Schmid J."/>
            <person name="Sidhu V.K."/>
            <person name="Sieber V."/>
            <person name="Tauch A."/>
            <person name="Watt S.A."/>
            <person name="Weisshaar B."/>
            <person name="Becker A."/>
            <person name="Niehaus K."/>
            <person name="Puehler A."/>
        </authorList>
    </citation>
    <scope>NUCLEOTIDE SEQUENCE [LARGE SCALE GENOMIC DNA]</scope>
    <source>
        <strain>B100</strain>
    </source>
</reference>
<sequence>MSTIEERVKKIVVEQLGVKEEEVTTSASFVDDLGADSLDTVELVMALEEEFECEIPDEEAEKITSVQQAIDYVKAHVKS</sequence>
<proteinExistence type="inferred from homology"/>
<name>ACP_XANCB</name>
<gene>
    <name evidence="1" type="primary">acpP</name>
    <name type="ordered locus">xcc-b100_3339</name>
</gene>
<organism>
    <name type="scientific">Xanthomonas campestris pv. campestris (strain B100)</name>
    <dbReference type="NCBI Taxonomy" id="509169"/>
    <lineage>
        <taxon>Bacteria</taxon>
        <taxon>Pseudomonadati</taxon>
        <taxon>Pseudomonadota</taxon>
        <taxon>Gammaproteobacteria</taxon>
        <taxon>Lysobacterales</taxon>
        <taxon>Lysobacteraceae</taxon>
        <taxon>Xanthomonas</taxon>
    </lineage>
</organism>
<keyword id="KW-0963">Cytoplasm</keyword>
<keyword id="KW-0275">Fatty acid biosynthesis</keyword>
<keyword id="KW-0276">Fatty acid metabolism</keyword>
<keyword id="KW-0444">Lipid biosynthesis</keyword>
<keyword id="KW-0443">Lipid metabolism</keyword>
<keyword id="KW-0596">Phosphopantetheine</keyword>
<keyword id="KW-0597">Phosphoprotein</keyword>
<comment type="function">
    <text evidence="1">Carrier of the growing fatty acid chain in fatty acid biosynthesis.</text>
</comment>
<comment type="pathway">
    <text evidence="1">Lipid metabolism; fatty acid biosynthesis.</text>
</comment>
<comment type="subcellular location">
    <subcellularLocation>
        <location evidence="1">Cytoplasm</location>
    </subcellularLocation>
</comment>
<comment type="PTM">
    <text evidence="1">4'-phosphopantetheine is transferred from CoA to a specific serine of apo-ACP by AcpS. This modification is essential for activity because fatty acids are bound in thioester linkage to the sulfhydryl of the prosthetic group.</text>
</comment>
<comment type="similarity">
    <text evidence="1">Belongs to the acyl carrier protein (ACP) family.</text>
</comment>
<evidence type="ECO:0000255" key="1">
    <source>
        <dbReference type="HAMAP-Rule" id="MF_01217"/>
    </source>
</evidence>
<evidence type="ECO:0000255" key="2">
    <source>
        <dbReference type="PROSITE-ProRule" id="PRU00258"/>
    </source>
</evidence>
<feature type="chain" id="PRO_1000139074" description="Acyl carrier protein">
    <location>
        <begin position="1"/>
        <end position="79"/>
    </location>
</feature>
<feature type="domain" description="Carrier" evidence="2">
    <location>
        <begin position="2"/>
        <end position="77"/>
    </location>
</feature>
<feature type="modified residue" description="O-(pantetheine 4'-phosphoryl)serine" evidence="2">
    <location>
        <position position="37"/>
    </location>
</feature>